<name>IAAT_ELECO</name>
<reference key="1">
    <citation type="journal article" date="1983" name="FEBS Lett.">
        <title>The complete amino acid sequence of the bifunctional alpha-amylase/trypsin inhibitor from seeds of ragi (Indian finger millet, Eleusine coracana Gaertn.).</title>
        <authorList>
            <person name="Campos F.A.P."/>
            <person name="Richardson M."/>
        </authorList>
    </citation>
    <scope>PROTEIN SEQUENCE</scope>
    <source>
        <tissue>Seed</tissue>
    </source>
</reference>
<reference key="2">
    <citation type="journal article" date="1998" name="Structure">
        <title>A novel strategy for inhibition of alpha-amylases: yellow meal worm alpha-amylase in complex with the Ragi bifunctional inhibitor at 2.5-A resolution.</title>
        <authorList>
            <person name="Strobl S."/>
            <person name="Maskos K."/>
            <person name="Wiegand G."/>
            <person name="Huber R."/>
            <person name="Gomis-Rueth F.-X."/>
            <person name="Glockshuber R."/>
        </authorList>
    </citation>
    <scope>X-RAY CRYSTALLOGRAPHY (2.5 ANGSTROMS)</scope>
    <source>
        <tissue>Seed</tissue>
    </source>
</reference>
<reference key="3">
    <citation type="journal article" date="1999" name="Acta Crystallogr. D">
        <title>Structure of the bifunctional inhibitor of trypsin and alpha-amylase from ragi seeds at 2.9-A resolution.</title>
        <authorList>
            <person name="Gourinath S."/>
            <person name="Srinivasan A."/>
            <person name="Singh T.P."/>
        </authorList>
    </citation>
    <scope>X-RAY CRYSTALLOGRAPHY (2.9 ANGSTROMS)</scope>
    <source>
        <tissue>Seed</tissue>
    </source>
</reference>
<reference key="4">
    <citation type="journal article" date="2000" name="Acta Crystallogr. D">
        <title>Structure of the bifunctional inhibitor of trypsin and alpha-amylase from ragi seeds at 2.2 A resolution.</title>
        <authorList>
            <person name="Gourinath S."/>
            <person name="Alam N."/>
            <person name="Srinivasan A."/>
            <person name="Betzel C."/>
            <person name="Singh T.P."/>
        </authorList>
    </citation>
    <scope>X-RAY CRYSTALLOGRAPHY (2.2 ANGSTROMS)</scope>
    <scope>DISULFIDE BONDS</scope>
    <source>
        <tissue>Seed</tissue>
    </source>
</reference>
<reference key="5">
    <citation type="journal article" date="1995" name="Biochemistry">
        <title>Determination of the three-dimensional structure of the bifunctional alpha-amylase/trypsin inhibitor from ragi seeds by NMR spectroscopy.</title>
        <authorList>
            <person name="Strobl S."/>
            <person name="Muehlhahn P."/>
            <person name="Bernstein R."/>
            <person name="Wiltscheck R."/>
            <person name="Maskos K."/>
            <person name="Wunderlich M."/>
            <person name="Huber R."/>
            <person name="Glockshuber R."/>
            <person name="Holak T.A."/>
        </authorList>
    </citation>
    <scope>STRUCTURE BY NMR</scope>
    <source>
        <tissue>Seed</tissue>
    </source>
</reference>
<protein>
    <recommendedName>
        <fullName>Alpha-amylase/trypsin inhibitor</fullName>
        <shortName>RBI</shortName>
    </recommendedName>
    <alternativeName>
        <fullName>RATI</fullName>
    </alternativeName>
</protein>
<dbReference type="PIR" id="A01326">
    <property type="entry name" value="WIILAI"/>
</dbReference>
<dbReference type="PDB" id="1B1U">
    <property type="method" value="X-ray"/>
    <property type="resolution" value="2.20 A"/>
    <property type="chains" value="A=1-122"/>
</dbReference>
<dbReference type="PDB" id="1BIP">
    <property type="method" value="NMR"/>
    <property type="chains" value="A=1-122"/>
</dbReference>
<dbReference type="PDB" id="1TMQ">
    <property type="method" value="X-ray"/>
    <property type="resolution" value="2.50 A"/>
    <property type="chains" value="B=1-117"/>
</dbReference>
<dbReference type="PDBsum" id="1B1U"/>
<dbReference type="PDBsum" id="1BIP"/>
<dbReference type="PDBsum" id="1TMQ"/>
<dbReference type="SMR" id="P01087"/>
<dbReference type="MINT" id="P01087"/>
<dbReference type="MEROPS" id="I06.003"/>
<dbReference type="EvolutionaryTrace" id="P01087"/>
<dbReference type="GO" id="GO:0005576">
    <property type="term" value="C:extracellular region"/>
    <property type="evidence" value="ECO:0007669"/>
    <property type="project" value="UniProtKB-SubCell"/>
</dbReference>
<dbReference type="GO" id="GO:0015066">
    <property type="term" value="F:alpha-amylase inhibitor activity"/>
    <property type="evidence" value="ECO:0007669"/>
    <property type="project" value="UniProtKB-KW"/>
</dbReference>
<dbReference type="GO" id="GO:0004867">
    <property type="term" value="F:serine-type endopeptidase inhibitor activity"/>
    <property type="evidence" value="ECO:0007669"/>
    <property type="project" value="UniProtKB-KW"/>
</dbReference>
<dbReference type="CDD" id="cd00261">
    <property type="entry name" value="AAI_SS"/>
    <property type="match status" value="1"/>
</dbReference>
<dbReference type="Gene3D" id="1.10.110.10">
    <property type="entry name" value="Plant lipid-transfer and hydrophobic proteins"/>
    <property type="match status" value="1"/>
</dbReference>
<dbReference type="InterPro" id="IPR006106">
    <property type="entry name" value="Allergen/soft/tryp_amyl_inhib"/>
</dbReference>
<dbReference type="InterPro" id="IPR006105">
    <property type="entry name" value="Allergen/tryp_amyl_inhib_CS"/>
</dbReference>
<dbReference type="InterPro" id="IPR036312">
    <property type="entry name" value="Bifun_inhib/LTP/seed_sf"/>
</dbReference>
<dbReference type="InterPro" id="IPR016140">
    <property type="entry name" value="Bifunc_inhib/LTP/seed_store"/>
</dbReference>
<dbReference type="PANTHER" id="PTHR34481">
    <property type="entry name" value="TRYPSIN/FACTOR XIIA INHIBITOR-RELATED"/>
    <property type="match status" value="1"/>
</dbReference>
<dbReference type="PANTHER" id="PTHR34481:SF2">
    <property type="entry name" value="TRYPSIN_FACTOR XIIA INHIBITOR"/>
    <property type="match status" value="1"/>
</dbReference>
<dbReference type="Pfam" id="PF00234">
    <property type="entry name" value="Tryp_alpha_amyl"/>
    <property type="match status" value="1"/>
</dbReference>
<dbReference type="PRINTS" id="PR00808">
    <property type="entry name" value="AMLASEINHBTR"/>
</dbReference>
<dbReference type="SMART" id="SM00499">
    <property type="entry name" value="AAI"/>
    <property type="match status" value="1"/>
</dbReference>
<dbReference type="SUPFAM" id="SSF47699">
    <property type="entry name" value="Bifunctional inhibitor/lipid-transfer protein/seed storage 2S albumin"/>
    <property type="match status" value="1"/>
</dbReference>
<dbReference type="PROSITE" id="PS00426">
    <property type="entry name" value="CEREAL_TRYP_AMYL_INH"/>
    <property type="match status" value="1"/>
</dbReference>
<evidence type="ECO:0000269" key="1">
    <source>
    </source>
</evidence>
<evidence type="ECO:0000305" key="2"/>
<evidence type="ECO:0007744" key="3">
    <source>
        <dbReference type="PDB" id="1B1U"/>
    </source>
</evidence>
<evidence type="ECO:0007829" key="4">
    <source>
        <dbReference type="PDB" id="1B1U"/>
    </source>
</evidence>
<evidence type="ECO:0007829" key="5">
    <source>
        <dbReference type="PDB" id="1BIP"/>
    </source>
</evidence>
<evidence type="ECO:0007829" key="6">
    <source>
        <dbReference type="PDB" id="1TMQ"/>
    </source>
</evidence>
<organism>
    <name type="scientific">Eleusine coracana</name>
    <name type="common">Indian finger millet</name>
    <name type="synonym">Ragi</name>
    <dbReference type="NCBI Taxonomy" id="4511"/>
    <lineage>
        <taxon>Eukaryota</taxon>
        <taxon>Viridiplantae</taxon>
        <taxon>Streptophyta</taxon>
        <taxon>Embryophyta</taxon>
        <taxon>Tracheophyta</taxon>
        <taxon>Spermatophyta</taxon>
        <taxon>Magnoliopsida</taxon>
        <taxon>Liliopsida</taxon>
        <taxon>Poales</taxon>
        <taxon>Poaceae</taxon>
        <taxon>PACMAD clade</taxon>
        <taxon>Chloridoideae</taxon>
        <taxon>Cynodonteae</taxon>
        <taxon>Eleusininae</taxon>
        <taxon>Eleusine</taxon>
    </lineage>
</organism>
<accession>P01087</accession>
<sequence>SVGTSCIPGMAIPHNPLDSCRWYVSTRTCGVGPRLATQEMKARCCRQLEAIPAYCRCEAVRILMDGVVTPSGQHEGRLLQDLPGCPRQVQRAFAPKLVTEVECNLATIHGGPFCLSLLGAGE</sequence>
<proteinExistence type="evidence at protein level"/>
<feature type="chain" id="PRO_0000070490" description="Alpha-amylase/trypsin inhibitor">
    <location>
        <begin position="1"/>
        <end position="122"/>
    </location>
</feature>
<feature type="disulfide bond" evidence="1 3">
    <location>
        <begin position="6"/>
        <end position="55"/>
    </location>
</feature>
<feature type="disulfide bond" evidence="1 3">
    <location>
        <begin position="20"/>
        <end position="44"/>
    </location>
</feature>
<feature type="disulfide bond" evidence="1 3">
    <location>
        <begin position="29"/>
        <end position="85"/>
    </location>
</feature>
<feature type="disulfide bond" evidence="1 3">
    <location>
        <begin position="45"/>
        <end position="103"/>
    </location>
</feature>
<feature type="disulfide bond" evidence="1 3">
    <location>
        <begin position="57"/>
        <end position="114"/>
    </location>
</feature>
<feature type="sequence variant">
    <original>ST</original>
    <variation>AK</variation>
    <location>
        <begin position="25"/>
        <end position="26"/>
    </location>
</feature>
<feature type="sequence variant">
    <original>T</original>
    <variation>A</variation>
    <location>
        <position position="28"/>
    </location>
</feature>
<feature type="sequence variant">
    <original>P</original>
    <variation>S</variation>
    <location>
        <position position="70"/>
    </location>
</feature>
<feature type="helix" evidence="6">
    <location>
        <begin position="2"/>
        <end position="5"/>
    </location>
</feature>
<feature type="turn" evidence="4">
    <location>
        <begin position="9"/>
        <end position="11"/>
    </location>
</feature>
<feature type="turn" evidence="4">
    <location>
        <begin position="16"/>
        <end position="18"/>
    </location>
</feature>
<feature type="helix" evidence="4">
    <location>
        <begin position="19"/>
        <end position="29"/>
    </location>
</feature>
<feature type="strand" evidence="5">
    <location>
        <begin position="32"/>
        <end position="35"/>
    </location>
</feature>
<feature type="helix" evidence="4">
    <location>
        <begin position="37"/>
        <end position="50"/>
    </location>
</feature>
<feature type="turn" evidence="4">
    <location>
        <begin position="53"/>
        <end position="55"/>
    </location>
</feature>
<feature type="helix" evidence="4">
    <location>
        <begin position="56"/>
        <end position="64"/>
    </location>
</feature>
<feature type="helix" evidence="4">
    <location>
        <begin position="87"/>
        <end position="93"/>
    </location>
</feature>
<feature type="helix" evidence="4">
    <location>
        <begin position="94"/>
        <end position="96"/>
    </location>
</feature>
<feature type="turn" evidence="4">
    <location>
        <begin position="100"/>
        <end position="103"/>
    </location>
</feature>
<feature type="strand" evidence="4">
    <location>
        <begin position="110"/>
        <end position="112"/>
    </location>
</feature>
<feature type="strand" evidence="4">
    <location>
        <begin position="115"/>
        <end position="117"/>
    </location>
</feature>
<keyword id="KW-0002">3D-structure</keyword>
<keyword id="KW-0022">Alpha-amylase inhibitor</keyword>
<keyword id="KW-0903">Direct protein sequencing</keyword>
<keyword id="KW-1015">Disulfide bond</keyword>
<keyword id="KW-0646">Protease inhibitor</keyword>
<keyword id="KW-0964">Secreted</keyword>
<keyword id="KW-0722">Serine protease inhibitor</keyword>
<comment type="function">
    <text>May play a protective role against endo- and exogenous hydrolytic activities in the Ragi seeds.</text>
</comment>
<comment type="subcellular location">
    <subcellularLocation>
        <location>Secreted</location>
    </subcellularLocation>
</comment>
<comment type="tissue specificity">
    <text>Seeds.</text>
</comment>
<comment type="similarity">
    <text evidence="2">Belongs to the protease inhibitor I6 (cereal trypsin/alpha-amylase inhibitor) family.</text>
</comment>